<sequence length="700" mass="78971">MSGRRKGCSAATASSSSSSPPSRLPLPGHARRPRRKRCLVPEVFCTRDLADLCVRRDYEGLRRYLRRFEGSCVSLGWPSQCIYVVGGEHSPHSLTEIDLEHCQNDFFGEFRALHLIGTVSHATCRYQVFVDAYGAVFAYDAQEDCLYELASDLAGFFAKGMIRCDPVHESICARLQPNVPLVHPDHRAELCRRSRASARGRYLRSLLAFRELLACEDTAARCAYVEAHREAQLTLIWPEKHSLVLRTARDLGLSASMLRRFQRSLYTREPVMPLGEIEGAEDKTFFHRVRILCGDTGTVYAALVGQDKLVRLSRDLRGFVRVGLALLIDDFRYESIGPVDRSSLYEANPELRLPFKKRRLVVGYFDSLSSLYLRGQPKFSSIWRGLRDAWTHKRPKPRERASGVHLQRYVRATAGRWLPLCWPPLHGIMLGDTQYFGVVRDHKTYRRFSCLRQAGRLYFIGLVSVYECVPDANTAPEIWVSGHGHAFAYLPGEDKVYVLGLSFGEFFENGLFAVYSFFERDYVDEIVEGAWFKHTFAGMYELSQILHDRANLLRVCQLHAGSKIRLGGSPACTFTFGSWNVAEADEANNFVIGVLEQAHFVVIGWMEPVNKAVFMDAHGGIHVLLYGTMLVKLAETLRGFIRQGSFWFRCPRRFCFSPLDSSATVAAKPVSSHTSPAYDVSEYVFSGRSVLDSVSGTGAS</sequence>
<organism>
    <name type="scientific">Human cytomegalovirus (strain Merlin)</name>
    <name type="common">HHV-5</name>
    <name type="synonym">Human herpesvirus 5</name>
    <dbReference type="NCBI Taxonomy" id="295027"/>
    <lineage>
        <taxon>Viruses</taxon>
        <taxon>Duplodnaviria</taxon>
        <taxon>Heunggongvirae</taxon>
        <taxon>Peploviricota</taxon>
        <taxon>Herviviricetes</taxon>
        <taxon>Herpesvirales</taxon>
        <taxon>Orthoherpesviridae</taxon>
        <taxon>Betaherpesvirinae</taxon>
        <taxon>Cytomegalovirus</taxon>
        <taxon>Cytomegalovirus humanbeta5</taxon>
        <taxon>Human cytomegalovirus</taxon>
    </lineage>
</organism>
<organismHost>
    <name type="scientific">Homo sapiens</name>
    <name type="common">Human</name>
    <dbReference type="NCBI Taxonomy" id="9606"/>
</organismHost>
<gene>
    <name type="primary">UL29</name>
</gene>
<evidence type="ECO:0000250" key="1"/>
<evidence type="ECO:0000256" key="2">
    <source>
        <dbReference type="SAM" id="MobiDB-lite"/>
    </source>
</evidence>
<evidence type="ECO:0000305" key="3"/>
<feature type="chain" id="PRO_0000417860" description="Protein UL29/28">
    <location>
        <begin position="1"/>
        <end position="700"/>
    </location>
</feature>
<feature type="region of interest" description="Disordered" evidence="2">
    <location>
        <begin position="1"/>
        <end position="30"/>
    </location>
</feature>
<feature type="compositionally biased region" description="Low complexity" evidence="2">
    <location>
        <begin position="9"/>
        <end position="21"/>
    </location>
</feature>
<comment type="function">
    <text evidence="1">Contributes to activation of immediate-early gene expression.</text>
</comment>
<comment type="subunit">
    <text evidence="1">Interacts with UL38 and host HDAC1; these interactions are necessary for the HDAC1 interaction with UL38. Interacts with host MTA2 (By similarity).</text>
</comment>
<comment type="subcellular location">
    <subcellularLocation>
        <location evidence="1">Virion</location>
    </subcellularLocation>
    <subcellularLocation>
        <location evidence="1">Host nucleus</location>
    </subcellularLocation>
    <subcellularLocation>
        <location evidence="1">Host cytoplasm</location>
    </subcellularLocation>
    <text evidence="1">Expressed exclusively within the host nucleus in early times of infection and then present in both nucleus and cytoplasm at 72 hours post infection.</text>
</comment>
<comment type="similarity">
    <text evidence="3">Belongs to the herpesviridae US22 family.</text>
</comment>
<keyword id="KW-0244">Early protein</keyword>
<keyword id="KW-1035">Host cytoplasm</keyword>
<keyword id="KW-1048">Host nucleus</keyword>
<keyword id="KW-1185">Reference proteome</keyword>
<keyword id="KW-0946">Virion</keyword>
<dbReference type="EMBL" id="AY446894">
    <property type="protein sequence ID" value="AAR31593.2"/>
    <property type="molecule type" value="Genomic_DNA"/>
</dbReference>
<dbReference type="RefSeq" id="YP_081487.2">
    <property type="nucleotide sequence ID" value="NC_006273.2"/>
</dbReference>
<dbReference type="GeneID" id="3077519"/>
<dbReference type="KEGG" id="vg:3077519"/>
<dbReference type="Reactome" id="R-HSA-9610379">
    <property type="pathway name" value="HCMV Late Events"/>
</dbReference>
<dbReference type="Proteomes" id="UP000000938">
    <property type="component" value="Segment"/>
</dbReference>
<dbReference type="GO" id="GO:0030430">
    <property type="term" value="C:host cell cytoplasm"/>
    <property type="evidence" value="ECO:0007669"/>
    <property type="project" value="UniProtKB-SubCell"/>
</dbReference>
<dbReference type="GO" id="GO:0042025">
    <property type="term" value="C:host cell nucleus"/>
    <property type="evidence" value="ECO:0007669"/>
    <property type="project" value="UniProtKB-SubCell"/>
</dbReference>
<dbReference type="GO" id="GO:0044423">
    <property type="term" value="C:virion component"/>
    <property type="evidence" value="ECO:0007669"/>
    <property type="project" value="UniProtKB-KW"/>
</dbReference>
<dbReference type="InterPro" id="IPR003360">
    <property type="entry name" value="US22-like"/>
</dbReference>
<dbReference type="Pfam" id="PF02393">
    <property type="entry name" value="US22"/>
    <property type="match status" value="4"/>
</dbReference>
<name>UL298_HCMVM</name>
<accession>Q6SWA3</accession>
<accession>D2K3J7</accession>
<protein>
    <recommendedName>
        <fullName>Protein UL29/28</fullName>
    </recommendedName>
</protein>
<reference key="1">
    <citation type="journal article" date="2004" name="J. Gen. Virol.">
        <title>Genetic content of wild-type human cytomegalovirus.</title>
        <authorList>
            <person name="Dolan A."/>
            <person name="Cunningham C."/>
            <person name="Hector R.D."/>
            <person name="Hassan-Walker A.F."/>
            <person name="Lee L."/>
            <person name="Addison C."/>
            <person name="Dargan D.J."/>
            <person name="McGeoch D.J."/>
            <person name="Gatherer D."/>
            <person name="Emery V.C."/>
            <person name="Griffiths P.D."/>
            <person name="Sinzger C."/>
            <person name="McSharry B.P."/>
            <person name="Wilkinson G.W.G."/>
            <person name="Davison A.J."/>
        </authorList>
    </citation>
    <scope>NUCLEOTIDE SEQUENCE [LARGE SCALE GENOMIC DNA]</scope>
</reference>
<proteinExistence type="inferred from homology"/>